<reference key="1">
    <citation type="journal article" date="2005" name="Nature">
        <title>The genome of the social amoeba Dictyostelium discoideum.</title>
        <authorList>
            <person name="Eichinger L."/>
            <person name="Pachebat J.A."/>
            <person name="Gloeckner G."/>
            <person name="Rajandream M.A."/>
            <person name="Sucgang R."/>
            <person name="Berriman M."/>
            <person name="Song J."/>
            <person name="Olsen R."/>
            <person name="Szafranski K."/>
            <person name="Xu Q."/>
            <person name="Tunggal B."/>
            <person name="Kummerfeld S."/>
            <person name="Madera M."/>
            <person name="Konfortov B.A."/>
            <person name="Rivero F."/>
            <person name="Bankier A.T."/>
            <person name="Lehmann R."/>
            <person name="Hamlin N."/>
            <person name="Davies R."/>
            <person name="Gaudet P."/>
            <person name="Fey P."/>
            <person name="Pilcher K."/>
            <person name="Chen G."/>
            <person name="Saunders D."/>
            <person name="Sodergren E.J."/>
            <person name="Davis P."/>
            <person name="Kerhornou A."/>
            <person name="Nie X."/>
            <person name="Hall N."/>
            <person name="Anjard C."/>
            <person name="Hemphill L."/>
            <person name="Bason N."/>
            <person name="Farbrother P."/>
            <person name="Desany B."/>
            <person name="Just E."/>
            <person name="Morio T."/>
            <person name="Rost R."/>
            <person name="Churcher C.M."/>
            <person name="Cooper J."/>
            <person name="Haydock S."/>
            <person name="van Driessche N."/>
            <person name="Cronin A."/>
            <person name="Goodhead I."/>
            <person name="Muzny D.M."/>
            <person name="Mourier T."/>
            <person name="Pain A."/>
            <person name="Lu M."/>
            <person name="Harper D."/>
            <person name="Lindsay R."/>
            <person name="Hauser H."/>
            <person name="James K.D."/>
            <person name="Quiles M."/>
            <person name="Madan Babu M."/>
            <person name="Saito T."/>
            <person name="Buchrieser C."/>
            <person name="Wardroper A."/>
            <person name="Felder M."/>
            <person name="Thangavelu M."/>
            <person name="Johnson D."/>
            <person name="Knights A."/>
            <person name="Loulseged H."/>
            <person name="Mungall K.L."/>
            <person name="Oliver K."/>
            <person name="Price C."/>
            <person name="Quail M.A."/>
            <person name="Urushihara H."/>
            <person name="Hernandez J."/>
            <person name="Rabbinowitsch E."/>
            <person name="Steffen D."/>
            <person name="Sanders M."/>
            <person name="Ma J."/>
            <person name="Kohara Y."/>
            <person name="Sharp S."/>
            <person name="Simmonds M.N."/>
            <person name="Spiegler S."/>
            <person name="Tivey A."/>
            <person name="Sugano S."/>
            <person name="White B."/>
            <person name="Walker D."/>
            <person name="Woodward J.R."/>
            <person name="Winckler T."/>
            <person name="Tanaka Y."/>
            <person name="Shaulsky G."/>
            <person name="Schleicher M."/>
            <person name="Weinstock G.M."/>
            <person name="Rosenthal A."/>
            <person name="Cox E.C."/>
            <person name="Chisholm R.L."/>
            <person name="Gibbs R.A."/>
            <person name="Loomis W.F."/>
            <person name="Platzer M."/>
            <person name="Kay R.R."/>
            <person name="Williams J.G."/>
            <person name="Dear P.H."/>
            <person name="Noegel A.A."/>
            <person name="Barrell B.G."/>
            <person name="Kuspa A."/>
        </authorList>
    </citation>
    <scope>NUCLEOTIDE SEQUENCE [LARGE SCALE GENOMIC DNA]</scope>
    <source>
        <strain>AX4</strain>
    </source>
</reference>
<name>Y6515_DICDI</name>
<keyword id="KW-1185">Reference proteome</keyword>
<proteinExistence type="predicted"/>
<sequence length="73" mass="8227">MTIINSLQSFLNFKKTNNINCSSSLYIDCKNNNIGYSNNNNNNKIYGTNFIAGFDIWIIDNGKTFEPNAGLKL</sequence>
<dbReference type="EMBL" id="AAFI02000079">
    <property type="protein sequence ID" value="EAL64572.1"/>
    <property type="molecule type" value="Genomic_DNA"/>
</dbReference>
<dbReference type="RefSeq" id="XP_638073.1">
    <property type="nucleotide sequence ID" value="XM_632981.1"/>
</dbReference>
<dbReference type="PaxDb" id="44689-DDB0186515"/>
<dbReference type="EnsemblProtists" id="EAL64572">
    <property type="protein sequence ID" value="EAL64572"/>
    <property type="gene ID" value="DDB_G0285469"/>
</dbReference>
<dbReference type="GeneID" id="8625119"/>
<dbReference type="KEGG" id="ddi:DDB_G0285469"/>
<dbReference type="dictyBase" id="DDB_G0285469"/>
<dbReference type="VEuPathDB" id="AmoebaDB:DDB_G0285469"/>
<dbReference type="HOGENOM" id="CLU_2710021_0_0_1"/>
<dbReference type="InParanoid" id="Q54N70"/>
<dbReference type="PRO" id="PR:Q54N70"/>
<dbReference type="Proteomes" id="UP000002195">
    <property type="component" value="Chromosome 4"/>
</dbReference>
<gene>
    <name type="ORF">DDB_G0285469</name>
</gene>
<accession>Q54N70</accession>
<organism>
    <name type="scientific">Dictyostelium discoideum</name>
    <name type="common">Social amoeba</name>
    <dbReference type="NCBI Taxonomy" id="44689"/>
    <lineage>
        <taxon>Eukaryota</taxon>
        <taxon>Amoebozoa</taxon>
        <taxon>Evosea</taxon>
        <taxon>Eumycetozoa</taxon>
        <taxon>Dictyostelia</taxon>
        <taxon>Dictyosteliales</taxon>
        <taxon>Dictyosteliaceae</taxon>
        <taxon>Dictyostelium</taxon>
    </lineage>
</organism>
<protein>
    <recommendedName>
        <fullName>Uncharacterized protein DDB_G0285469</fullName>
    </recommendedName>
</protein>
<feature type="chain" id="PRO_0000350806" description="Uncharacterized protein DDB_G0285469">
    <location>
        <begin position="1"/>
        <end position="73"/>
    </location>
</feature>